<keyword id="KW-0521">NADP</keyword>
<keyword id="KW-0560">Oxidoreductase</keyword>
<protein>
    <recommendedName>
        <fullName evidence="1">GMP reductase</fullName>
        <ecNumber evidence="1">1.7.1.7</ecNumber>
    </recommendedName>
    <alternativeName>
        <fullName evidence="1">Guanosine 5'-monophosphate oxidoreductase</fullName>
        <shortName evidence="1">Guanosine monophosphate reductase</shortName>
    </alternativeName>
</protein>
<dbReference type="EC" id="1.7.1.7" evidence="1"/>
<dbReference type="EMBL" id="AM295007">
    <property type="protein sequence ID" value="CAM30260.1"/>
    <property type="molecule type" value="Genomic_DNA"/>
</dbReference>
<dbReference type="RefSeq" id="WP_011888882.1">
    <property type="nucleotide sequence ID" value="NC_009332.1"/>
</dbReference>
<dbReference type="SMR" id="A2REI5"/>
<dbReference type="KEGG" id="spf:SpyM50933"/>
<dbReference type="HOGENOM" id="CLU_022552_5_0_9"/>
<dbReference type="GO" id="GO:0005829">
    <property type="term" value="C:cytosol"/>
    <property type="evidence" value="ECO:0007669"/>
    <property type="project" value="TreeGrafter"/>
</dbReference>
<dbReference type="GO" id="GO:1902560">
    <property type="term" value="C:GMP reductase complex"/>
    <property type="evidence" value="ECO:0007669"/>
    <property type="project" value="InterPro"/>
</dbReference>
<dbReference type="GO" id="GO:0003920">
    <property type="term" value="F:GMP reductase activity"/>
    <property type="evidence" value="ECO:0007669"/>
    <property type="project" value="UniProtKB-UniRule"/>
</dbReference>
<dbReference type="GO" id="GO:0006163">
    <property type="term" value="P:purine nucleotide metabolic process"/>
    <property type="evidence" value="ECO:0007669"/>
    <property type="project" value="UniProtKB-UniRule"/>
</dbReference>
<dbReference type="CDD" id="cd00381">
    <property type="entry name" value="IMPDH"/>
    <property type="match status" value="1"/>
</dbReference>
<dbReference type="Gene3D" id="3.20.20.70">
    <property type="entry name" value="Aldolase class I"/>
    <property type="match status" value="1"/>
</dbReference>
<dbReference type="HAMAP" id="MF_01511">
    <property type="entry name" value="GMP_reduct_type2"/>
    <property type="match status" value="1"/>
</dbReference>
<dbReference type="InterPro" id="IPR013785">
    <property type="entry name" value="Aldolase_TIM"/>
</dbReference>
<dbReference type="InterPro" id="IPR050139">
    <property type="entry name" value="GMP_reductase"/>
</dbReference>
<dbReference type="InterPro" id="IPR005994">
    <property type="entry name" value="GuaC_type_2"/>
</dbReference>
<dbReference type="InterPro" id="IPR015875">
    <property type="entry name" value="IMP_DH/GMP_Rdtase_CS"/>
</dbReference>
<dbReference type="InterPro" id="IPR001093">
    <property type="entry name" value="IMP_DH_GMPRt"/>
</dbReference>
<dbReference type="NCBIfam" id="TIGR01306">
    <property type="entry name" value="GMP_reduct_2"/>
    <property type="match status" value="1"/>
</dbReference>
<dbReference type="NCBIfam" id="NF003966">
    <property type="entry name" value="PRK05458.1"/>
    <property type="match status" value="1"/>
</dbReference>
<dbReference type="PANTHER" id="PTHR43170">
    <property type="entry name" value="GMP REDUCTASE"/>
    <property type="match status" value="1"/>
</dbReference>
<dbReference type="PANTHER" id="PTHR43170:SF5">
    <property type="entry name" value="GMP REDUCTASE"/>
    <property type="match status" value="1"/>
</dbReference>
<dbReference type="Pfam" id="PF00478">
    <property type="entry name" value="IMPDH"/>
    <property type="match status" value="1"/>
</dbReference>
<dbReference type="PIRSF" id="PIRSF036500">
    <property type="entry name" value="GMP_red_Firmic"/>
    <property type="match status" value="1"/>
</dbReference>
<dbReference type="SMART" id="SM01240">
    <property type="entry name" value="IMPDH"/>
    <property type="match status" value="1"/>
</dbReference>
<dbReference type="SUPFAM" id="SSF51412">
    <property type="entry name" value="Inosine monophosphate dehydrogenase (IMPDH)"/>
    <property type="match status" value="1"/>
</dbReference>
<dbReference type="PROSITE" id="PS00487">
    <property type="entry name" value="IMP_DH_GMP_RED"/>
    <property type="match status" value="1"/>
</dbReference>
<sequence length="327" mass="36009">MFNDIPVFDYEDIQLIPNKCIITSRSQADTSVTLGKYQFKLPVIPANMQTIIDETIAEQLAKEGYFYIMHRFDEDSRKPFIKRMHEQGLIASISVGVKAYEYEFVTSLKEDTPEFITIDIAHGHANSVIDMIKHIKTELPETFVIAGNVGTPEAVRELENAGADATKVGIGPGKVCITKVKTGFGTGGWQLAALRWCAKAARKSIIADGGIRTHGDIAKSIRFGASMVMIGSLFAGHIESPGKTVEVDGETFKEYYGSASEYQKGEHKNVEGKKILLPTKGHLSDTLTEMQQDLQSSISYAGGKDLDSLRHVDYVIVKNSIWNGDSI</sequence>
<feature type="chain" id="PRO_0000294289" description="GMP reductase">
    <location>
        <begin position="1"/>
        <end position="327"/>
    </location>
</feature>
<feature type="active site" description="Thioimidate intermediate" evidence="1">
    <location>
        <position position="176"/>
    </location>
</feature>
<feature type="binding site" evidence="1">
    <location>
        <begin position="205"/>
        <end position="228"/>
    </location>
    <ligand>
        <name>NADP(+)</name>
        <dbReference type="ChEBI" id="CHEBI:58349"/>
    </ligand>
</feature>
<accession>A2REI5</accession>
<evidence type="ECO:0000255" key="1">
    <source>
        <dbReference type="HAMAP-Rule" id="MF_01511"/>
    </source>
</evidence>
<comment type="function">
    <text evidence="1">Catalyzes the irreversible NADPH-dependent deamination of GMP to IMP. It functions in the conversion of nucleobase, nucleoside and nucleotide derivatives of G to A nucleotides, and in maintaining the intracellular balance of A and G nucleotides.</text>
</comment>
<comment type="catalytic activity">
    <reaction evidence="1">
        <text>IMP + NH4(+) + NADP(+) = GMP + NADPH + 2 H(+)</text>
        <dbReference type="Rhea" id="RHEA:17185"/>
        <dbReference type="ChEBI" id="CHEBI:15378"/>
        <dbReference type="ChEBI" id="CHEBI:28938"/>
        <dbReference type="ChEBI" id="CHEBI:57783"/>
        <dbReference type="ChEBI" id="CHEBI:58053"/>
        <dbReference type="ChEBI" id="CHEBI:58115"/>
        <dbReference type="ChEBI" id="CHEBI:58349"/>
        <dbReference type="EC" id="1.7.1.7"/>
    </reaction>
</comment>
<comment type="similarity">
    <text evidence="1">Belongs to the IMPDH/GMPR family. GuaC type 2 subfamily.</text>
</comment>
<gene>
    <name evidence="1" type="primary">guaC</name>
    <name type="ordered locus">SpyM50933</name>
</gene>
<proteinExistence type="inferred from homology"/>
<organism>
    <name type="scientific">Streptococcus pyogenes serotype M5 (strain Manfredo)</name>
    <dbReference type="NCBI Taxonomy" id="160491"/>
    <lineage>
        <taxon>Bacteria</taxon>
        <taxon>Bacillati</taxon>
        <taxon>Bacillota</taxon>
        <taxon>Bacilli</taxon>
        <taxon>Lactobacillales</taxon>
        <taxon>Streptococcaceae</taxon>
        <taxon>Streptococcus</taxon>
    </lineage>
</organism>
<name>GUAC_STRPG</name>
<reference key="1">
    <citation type="journal article" date="2007" name="J. Bacteriol.">
        <title>Complete genome of acute rheumatic fever-associated serotype M5 Streptococcus pyogenes strain Manfredo.</title>
        <authorList>
            <person name="Holden M.T.G."/>
            <person name="Scott A."/>
            <person name="Cherevach I."/>
            <person name="Chillingworth T."/>
            <person name="Churcher C."/>
            <person name="Cronin A."/>
            <person name="Dowd L."/>
            <person name="Feltwell T."/>
            <person name="Hamlin N."/>
            <person name="Holroyd S."/>
            <person name="Jagels K."/>
            <person name="Moule S."/>
            <person name="Mungall K."/>
            <person name="Quail M.A."/>
            <person name="Price C."/>
            <person name="Rabbinowitsch E."/>
            <person name="Sharp S."/>
            <person name="Skelton J."/>
            <person name="Whitehead S."/>
            <person name="Barrell B.G."/>
            <person name="Kehoe M."/>
            <person name="Parkhill J."/>
        </authorList>
    </citation>
    <scope>NUCLEOTIDE SEQUENCE [LARGE SCALE GENOMIC DNA]</scope>
    <source>
        <strain>Manfredo</strain>
    </source>
</reference>